<dbReference type="EMBL" id="Y11144">
    <property type="protein sequence ID" value="CAA72031.1"/>
    <property type="molecule type" value="mRNA"/>
</dbReference>
<dbReference type="SMR" id="P79894"/>
<dbReference type="InParanoid" id="P79894"/>
<dbReference type="Proteomes" id="UP000472265">
    <property type="component" value="Unplaced"/>
</dbReference>
<dbReference type="GO" id="GO:0005615">
    <property type="term" value="C:extracellular space"/>
    <property type="evidence" value="ECO:0007669"/>
    <property type="project" value="TreeGrafter"/>
</dbReference>
<dbReference type="GO" id="GO:0070186">
    <property type="term" value="F:growth hormone activity"/>
    <property type="evidence" value="ECO:0007669"/>
    <property type="project" value="TreeGrafter"/>
</dbReference>
<dbReference type="GO" id="GO:0005131">
    <property type="term" value="F:growth hormone receptor binding"/>
    <property type="evidence" value="ECO:0007669"/>
    <property type="project" value="TreeGrafter"/>
</dbReference>
<dbReference type="GO" id="GO:0048513">
    <property type="term" value="P:animal organ development"/>
    <property type="evidence" value="ECO:0007669"/>
    <property type="project" value="TreeGrafter"/>
</dbReference>
<dbReference type="GO" id="GO:0060396">
    <property type="term" value="P:growth hormone receptor signaling pathway"/>
    <property type="evidence" value="ECO:0007669"/>
    <property type="project" value="TreeGrafter"/>
</dbReference>
<dbReference type="GO" id="GO:0045927">
    <property type="term" value="P:positive regulation of growth"/>
    <property type="evidence" value="ECO:0007669"/>
    <property type="project" value="TreeGrafter"/>
</dbReference>
<dbReference type="GO" id="GO:0046427">
    <property type="term" value="P:positive regulation of receptor signaling pathway via JAK-STAT"/>
    <property type="evidence" value="ECO:0007669"/>
    <property type="project" value="TreeGrafter"/>
</dbReference>
<dbReference type="GO" id="GO:0031667">
    <property type="term" value="P:response to nutrient levels"/>
    <property type="evidence" value="ECO:0007669"/>
    <property type="project" value="TreeGrafter"/>
</dbReference>
<dbReference type="FunFam" id="1.20.1250.10:FF:000042">
    <property type="entry name" value="Somatolactin alpha"/>
    <property type="match status" value="1"/>
</dbReference>
<dbReference type="Gene3D" id="1.20.1250.10">
    <property type="match status" value="1"/>
</dbReference>
<dbReference type="InterPro" id="IPR009079">
    <property type="entry name" value="4_helix_cytokine-like_core"/>
</dbReference>
<dbReference type="InterPro" id="IPR001400">
    <property type="entry name" value="Somatotropin/Prolactin"/>
</dbReference>
<dbReference type="InterPro" id="IPR018116">
    <property type="entry name" value="Somatotropin_CS"/>
</dbReference>
<dbReference type="PANTHER" id="PTHR11417:SF3">
    <property type="entry name" value="SOMATOLACTIN ALPHA ISOFORM X1-RELATED"/>
    <property type="match status" value="1"/>
</dbReference>
<dbReference type="PANTHER" id="PTHR11417">
    <property type="entry name" value="SOMATOTROPIN,PROLACTIN"/>
    <property type="match status" value="1"/>
</dbReference>
<dbReference type="Pfam" id="PF00103">
    <property type="entry name" value="Hormone_1"/>
    <property type="match status" value="1"/>
</dbReference>
<dbReference type="PRINTS" id="PR00836">
    <property type="entry name" value="SOMATOTROPIN"/>
</dbReference>
<dbReference type="SUPFAM" id="SSF47266">
    <property type="entry name" value="4-helical cytokines"/>
    <property type="match status" value="1"/>
</dbReference>
<dbReference type="PROSITE" id="PS00266">
    <property type="entry name" value="SOMATOTROPIN_1"/>
    <property type="match status" value="1"/>
</dbReference>
<dbReference type="PROSITE" id="PS00338">
    <property type="entry name" value="SOMATOTROPIN_2"/>
    <property type="match status" value="1"/>
</dbReference>
<reference key="1">
    <citation type="submission" date="1997-02" db="EMBL/GenBank/DDBJ databases">
        <authorList>
            <person name="Cavari B."/>
            <person name="Funkenstein B."/>
            <person name="Kawauchi H."/>
        </authorList>
    </citation>
    <scope>NUCLEOTIDE SEQUENCE [MRNA]</scope>
    <source>
        <tissue>Pituitary</tissue>
    </source>
</reference>
<proteinExistence type="evidence at transcript level"/>
<evidence type="ECO:0000250" key="1"/>
<evidence type="ECO:0000255" key="2"/>
<evidence type="ECO:0000305" key="3"/>
<feature type="signal peptide" evidence="2">
    <location>
        <begin position="1"/>
        <end position="24"/>
    </location>
</feature>
<feature type="chain" id="PRO_0000033078" description="Somatolactin-2">
    <location>
        <begin position="25"/>
        <end position="231"/>
    </location>
</feature>
<feature type="glycosylation site" description="N-linked (GlcNAc...) asparagine" evidence="2">
    <location>
        <position position="145"/>
    </location>
</feature>
<feature type="disulfide bond" evidence="1">
    <location>
        <begin position="29"/>
        <end position="39"/>
    </location>
</feature>
<feature type="disulfide bond" evidence="1">
    <location>
        <begin position="89"/>
        <end position="205"/>
    </location>
</feature>
<feature type="disulfide bond" evidence="1">
    <location>
        <begin position="222"/>
        <end position="230"/>
    </location>
</feature>
<organism>
    <name type="scientific">Sparus aurata</name>
    <name type="common">Gilthead sea bream</name>
    <dbReference type="NCBI Taxonomy" id="8175"/>
    <lineage>
        <taxon>Eukaryota</taxon>
        <taxon>Metazoa</taxon>
        <taxon>Chordata</taxon>
        <taxon>Craniata</taxon>
        <taxon>Vertebrata</taxon>
        <taxon>Euteleostomi</taxon>
        <taxon>Actinopterygii</taxon>
        <taxon>Neopterygii</taxon>
        <taxon>Teleostei</taxon>
        <taxon>Neoteleostei</taxon>
        <taxon>Acanthomorphata</taxon>
        <taxon>Eupercaria</taxon>
        <taxon>Spariformes</taxon>
        <taxon>Sparidae</taxon>
        <taxon>Sparus</taxon>
    </lineage>
</organism>
<protein>
    <recommendedName>
        <fullName>Somatolactin-2</fullName>
        <shortName>SL</shortName>
    </recommendedName>
</protein>
<accession>P79894</accession>
<comment type="subcellular location">
    <subcellularLocation>
        <location>Secreted</location>
    </subcellularLocation>
</comment>
<comment type="tissue specificity">
    <text>Pituitary gland.</text>
</comment>
<comment type="similarity">
    <text evidence="3">Belongs to the somatotropin/prolactin family.</text>
</comment>
<sequence>MRMMRAIKQGQWAILLWPYLLTTSIPLDCRDEQGGLSRCPSISQEKLLDRVIQHAELIYRVSEESCSLFEEMFIPFPLQLQRNQAGYPCITKALPIPSSKSEIQQISDKWLLHSVLMLVQSWIEPLVYLQTTLNRYDGVPDMLLNKTKWVSDKLMSLEQGVAVLIKKMLDEGLMTTTYSEQGLFQDDGQPEMLEYVMRDYTLLSCFKKDAHKMEILLKLLKCRQNDIHSCA</sequence>
<keyword id="KW-1015">Disulfide bond</keyword>
<keyword id="KW-0325">Glycoprotein</keyword>
<keyword id="KW-0372">Hormone</keyword>
<keyword id="KW-1185">Reference proteome</keyword>
<keyword id="KW-0964">Secreted</keyword>
<keyword id="KW-0732">Signal</keyword>
<name>SOML2_SPAAU</name>